<feature type="chain" id="PRO_0000444121" description="Nonribosomal peptide synthetase atnA">
    <location>
        <begin position="1"/>
        <end position="7214"/>
    </location>
</feature>
<feature type="domain" description="Carrier 1" evidence="3 11">
    <location>
        <begin position="786"/>
        <end position="862"/>
    </location>
</feature>
<feature type="domain" description="Carrier 2" evidence="3 11">
    <location>
        <begin position="1877"/>
        <end position="1953"/>
    </location>
</feature>
<feature type="domain" description="Carrier 3" evidence="3 11">
    <location>
        <begin position="3398"/>
        <end position="3472"/>
    </location>
</feature>
<feature type="domain" description="Carrier 4" evidence="3 11">
    <location>
        <begin position="4476"/>
        <end position="4552"/>
    </location>
</feature>
<feature type="domain" description="Carrier 5" evidence="3 11">
    <location>
        <begin position="5591"/>
        <end position="5667"/>
    </location>
</feature>
<feature type="domain" description="Carrier 6" evidence="3 11">
    <location>
        <begin position="6683"/>
        <end position="6766"/>
    </location>
</feature>
<feature type="region of interest" description="Adenylation 1" evidence="2 11">
    <location>
        <begin position="257"/>
        <end position="651"/>
    </location>
</feature>
<feature type="region of interest" description="Condensation 1" evidence="2 11">
    <location>
        <begin position="899"/>
        <end position="1318"/>
    </location>
</feature>
<feature type="region of interest" description="Adenylation 2" evidence="2 11">
    <location>
        <begin position="1340"/>
        <end position="1735"/>
    </location>
</feature>
<feature type="region of interest" description="Epimerization" evidence="2 11">
    <location>
        <begin position="1962"/>
        <end position="2384"/>
    </location>
</feature>
<feature type="region of interest" description="Condensation 2" evidence="2 11">
    <location>
        <begin position="2431"/>
        <end position="2845"/>
    </location>
</feature>
<feature type="region of interest" description="Adenylation 3" evidence="2 11">
    <location>
        <begin position="2866"/>
        <end position="3262"/>
    </location>
</feature>
<feature type="region of interest" description="Condensation 3" evidence="2 11">
    <location>
        <begin position="3510"/>
        <end position="3904"/>
    </location>
</feature>
<feature type="region of interest" description="Adenylation 4" evidence="2 11">
    <location>
        <begin position="3943"/>
        <end position="4339"/>
    </location>
</feature>
<feature type="region of interest" description="Condensation 4" evidence="2 11">
    <location>
        <begin position="4601"/>
        <end position="5033"/>
    </location>
</feature>
<feature type="region of interest" description="Adenylation 5" evidence="2 11">
    <location>
        <begin position="5051"/>
        <end position="5446"/>
    </location>
</feature>
<feature type="region of interest" description="Disordered" evidence="4">
    <location>
        <begin position="5489"/>
        <end position="5515"/>
    </location>
</feature>
<feature type="region of interest" description="Condensation 5" evidence="2 11">
    <location>
        <begin position="5707"/>
        <end position="6123"/>
    </location>
</feature>
<feature type="region of interest" description="Adenylation 6" evidence="2 11">
    <location>
        <begin position="6145"/>
        <end position="6543"/>
    </location>
</feature>
<feature type="region of interest" description="Thioesterase (TE) domain" evidence="2 11">
    <location>
        <begin position="6814"/>
        <end position="7194"/>
    </location>
</feature>
<feature type="region of interest" description="Disordered" evidence="4">
    <location>
        <begin position="6895"/>
        <end position="6915"/>
    </location>
</feature>
<feature type="modified residue" description="O-(pantetheine 4'-phosphoryl)serine" evidence="3">
    <location>
        <position position="823"/>
    </location>
</feature>
<feature type="modified residue" description="O-(pantetheine 4'-phosphoryl)serine" evidence="3">
    <location>
        <position position="1914"/>
    </location>
</feature>
<feature type="modified residue" description="O-(pantetheine 4'-phosphoryl)serine" evidence="3">
    <location>
        <position position="3433"/>
    </location>
</feature>
<feature type="modified residue" description="O-(pantetheine 4'-phosphoryl)serine" evidence="3">
    <location>
        <position position="4513"/>
    </location>
</feature>
<feature type="modified residue" description="O-(pantetheine 4'-phosphoryl)serine" evidence="3">
    <location>
        <position position="5628"/>
    </location>
</feature>
<feature type="modified residue" description="O-(pantetheine 4'-phosphoryl)serine" evidence="3">
    <location>
        <position position="6725"/>
    </location>
</feature>
<accession>Q5AUZ6</accession>
<accession>A0A1U8QJC1</accession>
<accession>C8V3Z0</accession>
<evidence type="ECO:0000250" key="1">
    <source>
        <dbReference type="UniProtKB" id="A0A144KPJ6"/>
    </source>
</evidence>
<evidence type="ECO:0000255" key="2"/>
<evidence type="ECO:0000255" key="3">
    <source>
        <dbReference type="PROSITE-ProRule" id="PRU00258"/>
    </source>
</evidence>
<evidence type="ECO:0000256" key="4">
    <source>
        <dbReference type="SAM" id="MobiDB-lite"/>
    </source>
</evidence>
<evidence type="ECO:0000269" key="5">
    <source>
    </source>
</evidence>
<evidence type="ECO:0000269" key="6">
    <source>
    </source>
</evidence>
<evidence type="ECO:0000269" key="7">
    <source>
    </source>
</evidence>
<evidence type="ECO:0000303" key="8">
    <source>
    </source>
</evidence>
<evidence type="ECO:0000305" key="9"/>
<evidence type="ECO:0000305" key="10">
    <source>
    </source>
</evidence>
<evidence type="ECO:0000305" key="11">
    <source>
    </source>
</evidence>
<name>ATNA_EMENI</name>
<protein>
    <recommendedName>
        <fullName evidence="8">Nonribosomal peptide synthetase atnA</fullName>
        <ecNumber evidence="10">6.3.2.-</ecNumber>
    </recommendedName>
    <alternativeName>
        <fullName evidence="8">Aspercryptin biosynthesis cluster protein A</fullName>
    </alternativeName>
</protein>
<comment type="function">
    <text evidence="5 6 7">Nonribosomal peptide synthetase; part of the gene cluster that mediates the biosynthesis of aspercryptins, linear lipopeptides built from six amino acids including 2 highly unusual and nonproteogenic amino acids, 2-amino-octanoic acid (2aoa) and 2-amino-dodecanol (2adol) (PubMed:23248299, PubMed:26563584, PubMed:27310134). The core structure of aspercryptins is as follows: Ser/Ala-Thr-Ile/Val-2aoa-Asn-2adol (PubMed:27310134). The first step of aspercryptin biosynthesis is the generation of the fatty acid precursors, octanoic and dodecanoic acids, by the FAS subunits atnF and atnM (PubMed:26563584, PubMed:27310134). The fatty acid precursors are likely transformed into the corresponding alpha-amino fatty acids in three steps (PubMed:26563584, PubMed:27310134). First, they are hydroxylated by the cytochrome P450 monooxygenase atnE, then oxidized to the corresponding alpha-keto acids by the NAD(P)-dependent oxidoreductase atnD, and finally converted to the alpha-amino fatty acids by the PLP-dependent aminotransferases atnH or atnJ (PubMed:26563584, PubMed:27310134). the alpha-amino fatty acids, 2-amino-octanoic and 2-amino-dodecanoic acids, are recognized, activated, and covalently tethered to the NRPS atnA by its fourth and sixth adenylation domains (PubMed:27310134). The second module of atnA is the Thr module and contains an epimerase (E) domain responsible for the epimerization of Thr to D-allo-Thr (PubMed:26563584). Additionally, despite atnA having only one epimerase domain, the first amino acid of aspercryptin A1 is D-Ser, suggesting that serine is either loaded directly as D-Ser on the first module or that the epimerase domain in the threonine module epimerizes both L-Ser and L-Thr (PubMed:27310134). After condensation of the hexapeptide of aspercryptin, the C-terminal reductase (TE) domain might be involved in the reductive release and production of the aldehyde hexapeptide (PubMed:26563584). Further reduction would generate aspercryptins (PubMed:26563584, PubMed:27310134). The variety of aspercryptins produced reflects the flexibility of the atnA NRPS, allowing incorporation of alanine instead of serine, valine for isoleucine, and a C10 fatty amino alcohol instead of the C12 version (PubMed:27310134). AtnB seems to be involved in the selectivity for Ile versus Val by the third module (PubMed:26563584). Moreover, type B, C and D aspercryptins have an additional N-terminal cichorine, acetyl and propionyl group respectively (PubMed:27310134).</text>
</comment>
<comment type="pathway">
    <text evidence="6">Secondary metabolite biosynthesis.</text>
</comment>
<comment type="induction">
    <text evidence="7">Expression is positively regulated by the aspercryptin cluser-specific transcription factor atnN (PubMed:27310134).</text>
</comment>
<comment type="domain">
    <text evidence="1 11">NRP synthetases are composed of discrete domains (adenylation (A), thiolation (T) or peptidyl carrier protein (PCP) and condensation (C) domains) which when grouped together are referred to as a single module (By similarity). Each module is responsible for the recognition (via the A domain) and incorporation of a single amino acid into the growing peptide product (By similarity). Thus, an NRP synthetase is generally composed of one or more modules and can terminate in a thioesterase domain (TE) that releases the newly synthesized peptide from the enzyme (By similarity). Occasionally, methyltransferase domains (responsible for amino acid methylation) are present within the NRP synthetase (By similarity). InpA has the following architecture: A-T-C-A-T-E-C-A-T-C-A-T-C-A-T-C-A-T-TE (PubMed:27310134).</text>
</comment>
<comment type="disruption phenotype">
    <text evidence="6 7">Eliminates the production of aspercryptin (PubMed:26563584, PubMed:27310134).</text>
</comment>
<comment type="similarity">
    <text evidence="9">Belongs to the NRP synthetase family.</text>
</comment>
<sequence length="7214" mass="795763">MPSISAAADSSAEFWKRNTAGMEISRLSHLTRSYEGQAQWRSYPLNPSIELQRLGAFCEAHRTSLLVILQAAWATVLGRFLATDTATFASCLENGDEAKHGVCSASWSQGATTLHELLEQLQQWHETSFTHQDIPLAELEQLLHVVPDTGLRVKHISSPSTSLSLSGPRHNRAIEVVAQVSPISVRISLEYNASALSSVYAQSIAGSLERSLQAVVNRGSTPVTQIDLCSKEDRESIFDWNAYVPVTISDCVHTRIERKALEQPHALAVAGSGGDMTYQQLNMQADNLAAYLQELGVGADSYVALCFEKSTLPIVAMLAVFKAGGAYVALNPAHPVKRQAVILSKINAQVILTGPGYAGTFPGLVKHSVEVTQDLLDQLAAERRATRLVRAARPETPAVVVFTSGSTGEPKGIVVEHRALVSSMIGHGTIMRLDSSTRALQFATYTFDLSVGEIFNTLMHGGCVCVPSEEERLDDLEGFIRRLEVNWALLTPTVLNMMTPANVPSVRTISTGGEPMKQDIIQAWADHVQLNNMYGPAETTILCAGRAALSPATPASNIGHALGARQWITNPMNPNQLCPIGAVGEVLIEGPGLARGYLHDEEKTNAAFVGNPDWLPKASPARRFYRSADLGFLSPDGTFNIVGRKDTQVKINGQRIELEEVEFNIKSLLNAGWQAVVAEVIKPKGYNDQSILGAFIQFEDDENDETELLGYISEGRRQQLRQLKEDLGLHLPAYMTPSVFVPMAHMPTTAHGKLDRRRLKDLAAGFSTEDLVSFSLAGSTNTAKREPVTETEKAVASLWSQVLKIPYESFGLNDNFFRLGGDSISAMKLSAAARSTGMSLTVAKIFGHPTLEAMSQIAVELSHTEIGSIKPFSLIDVENAFEFIDQLTLKWGLDRSSIEDAYPATALQEGLMAITQGEPGTYIYQNVYELPADIDLAKFCAAWESVVNTTEILRTTLLPTDTASTYQVVIKPSSIDWKYPASVEEYLKSDAQQTMLYGEPLARYALVPGTPGGSLSTFIWTAHHALYDGWSLPLLWKRVEEAYKGSGLSHQPHVAPFNRFIAHLRDMDAEATYAFWESYLSSSNPPKFPQLPYQTYKPRVNNIHQHEFSLTATSQSSGITTSTLIRAAWSLLMSQYTDAGDDIIIGVTVAGRNVDVPGISEMAAPMITTVPVRVQIDRDETVTELLTRVQTQTVEMMPFEHAGLQNIAKINRECRLACGFQNLLVVQPEEDESTSGSLGIKKIQSPEVGIYTYALVIQCLLRGDKVGVQVDFDDQVLSSWQVERICCQLEHLMGVLRASPNVKIGDLSLVSQKDYTQIMNWNHKLPVVEERCVHEIIRGQVLATPDAPAICSWDGDFTYAEVDRLSSRFARHLVSMGVGPETLVPHCFSKSAWTVIAMLAIIKAGGACVALDPGHPVDRLQAIINDAEAALVVTMPEHSHLFNGLVNKVVALSPQFFGSDDDLQSSETLPPRAGHKNPVFVLFTSGSTGKPKGIVIEHGMFASSAAAHSKAFGITAQSRVFQFAAHTFDVSVGDIFTSLMKGACICIPSDLERMNNVASAINRMKANYAFLTPTVANLLRPEQVPTLRTLTLGGEAPTRENIRTWADSLNLILCYGPAECSVYCSANPPATQQSNPAVLGHAIGGLIWLVDPVNHDKLTPVGCVGELVVQGAIVARGYLNEPEKTQSAFIQDPAWMPQTFPREYRRIYKTGDLARFNPDGSLSFVARKDTQAKVRGQRVELAEIEVHLSESPEIQHAMVAVPAAGPYKSRLVCILSLQELAQRSDGISRDSSRVALIQGSSDRSHAAQTASVVENRLAEKLPPYMIPAVWIPLKKMPLNLSGKIDRKLIKGWLEDVDEATYQSVAAMAAAEGTSLQQPTSDIEKKVQAAFSATLNIPVESVGLNTSFLSVGGDSISAMQVMSRLRSQNLRITVQDILKLRTVAALAGRAQYIEQSTTESSAPEAEVIDEWFELAPIQQLFFRMQPKGQNHFNQSFVLKLAQDVLQTELQRALEIVVQHHSMLRARFEQVDGSWSQKITNDVSGSFFMFPREEGSRERMMARFREAETLFDIKRGPMLTAQIWVAPESQYLFLAAHHLVIDLVSWRIILQDLEDVLRTGRINSTPTISFQNWAKLQREYVSQHLSKPDTWDLEAPTGDLAYWNMQGEANNWGDIVTESFTIDSQRTALLLGDCNIPLRTEPTDIMVAALLHSFRHAFSDRNVPAVYLEGHGREPWTSAIDVSRTVGWFTTMYPVSYETPEDNWLDAVKRLKDSRRKIAHNGWRYFTARSLLAGGMQDMEVVFNYLGLYQQLQRVDALFQESSITGTDCVEISPQMQRYSLFEIAAGVSNGRMEFTFEYNKKMSHRDTISSWINHYRQVLETGIDELMRQSELIPTLSDFPLLNLSYKDLDNLATSILPEAGVKSIDEIESLSPCSPMQLGLLMSQLKSEGAYEFFTIMEATAREGVDSAQLVAAWQQVIDRHPMLRTVFIKSAVPDRPYDQLVLKELRAQVVELRSDDPVHALRTLPQTAKLHQLAICHCENGRMFCKLEINHALIDGTSMAIIERDLKRAYSKKLSSVPPLAYVDYVSFLQEAKRAESVNFWNDYLQDAQPCQFPILNDGRDQSQALESINVELPGLTKETLSAFSERWGFTVANVVQTAWALVLRAFIGTDSVCYGYLTSGRDAPLDGIEDSVGPFINMLVCRLKFDPHEPALVALKNTQDGFLKAMSHQYVSLAEMQHALGVAAQGLFNTAMSFQRYSPEESMDLNLRTVYDYDPTEFNITVNVATREEGLQIDLTYWTSKLSSGQAVHLANTYSTVIMELLSNPETVLADVNMLSPLDRASLRDWNKELPFAVDRCMHEVIHQNARKRPHALALESWEAAYTYRDLDRASSRLARHLIKQGVSPDDCIPLCFEKSLYTIIALVAVLKAGGGFVLLDPKHPDDRLKGLLEDSKAKFLIVSPQTQDRCKDLISSLVVVSPKILDELPHADEDDIPPSTAVTPGDIMYVQFTSGSTGKPKGAVVHHRAACSSIEHHGKVMNYGPHSRIFQFSSYTFDAIILEAFTTLYHGGCVCIPSEEDRMSSMVQSMREMKVNNMFMTPTLARLFGPADVPSLTTLMLGGEPIPQDSINTWKDHVDLIGGYGPAECCVYCCYNPLSSSGFKPDVIGYPVGAVLWIVEADNHDRLVPVGAIGEIVVHGHTVGRGYLNDPTRTAASYISAPSWVADYGYPGEQTLYKTGDLGRYNSDGTLTIVGRKDTQVKVNGQRIELGEVEHCIKTEYPQVLQVAVDALKPEHANGRQILSAFLEFEAVEGSEEFQNKNSFLRAMNDKLRETMFEIEAILAQRLPPYMVPHLWFPLVTMPKSASGKTDRKVLKQLCNGLSKTELQQYSLASGSRKALETPMEETIAGLWKDLFGVSDIGSNDNFFRVGGDSIEAMKLAAAARAQGLSLSVADIFNYPKLDDMARIVVAAYGASAVAHKYDAPFSLVGGEESARSIVQKHIPHVQIDLVEDVYPSTSLQEGLLALTSSHSSAYVLQAPFLLPPNIDLDRFRDAWAKVVEANAILRTVIISTETQGTCQVTLRQSIEWSQASTLEEYLAQDRERPMGYGTALSRYGLTLDGYFVWTAHHSIYDGWSFALMLDEVEKRYKDESVVSRPLFAEYIRFLQRQQGKTDATAFWKSQLQDASSSSVFPQLPSSLYEVDVDRTFKYSFPFSTKSTVTASTLLSAAWGLTIGRLTNSSEVIYGSTRSGRNIDLAQATELMGPTIATVPIRISIDTSMSIEDFLAAVQNQATAAIPYEHLGLQNISKISPACKAACDFQNLFVVQPAVISDSTILGMKRVEIPTKGLHTYALNVECILTEEGTATLNFEYDGKVMQDYQIQRLAGQFHHVVCQLCENEDGRLKVGDVDAFSLDDEKQLRQWNARLKSFPEITRCAHDLVSERARLHPDLLAVTQSDGTSLTYDELEELSTLFARHLSTLKIGPGRIVPICLKKAVWVVVSILGVLKTGAAFVCLDPSSPSSRMHSIIEEVESEIVIVDPETKPIFNNHLQTLEIGAKSLDWIRSANASDMIFEVHRNPRDLMYVIFTSGSTGKPKGVMIEHASACSSFTYQGQEFGYDHESRVLQFSALTFDASLMEIFTTLCAGGCVCFPTEEEKQGDIVRAINNLRVNSVMLTPTVLRMIQPEDIPMVKHVVTGGEAVSHDIVQTWSSKVILKGVYGPTETSMICITADLVPGSSPANIGVPLGCRSWITLPDDHNHLAPIGSVGELLIQGPIVGRGYYKNQKQTQDVFIENPLWLQKRFGETGGGRLYKTGDLVYYAQNGDLMIVGRKDSQVKLHGQRIELGEIDHKMWSHPAVRQSSVVLPSQGPLKNRLVAVLTLDGTEERITTPHVLCPLSEEWKQYANSRIASIRQALRESLPSYMVPTVFVAVEKMPRQTSGKTDIKRVKKWVNELDEQTAEQALDIETTAPGLTVPGSEAEKVIQGAVSKVLNIPAEKIALNRSFISLGGDSITAIKLMNQLRDAGVNFSIKELLRAGSIGELAGRVTSISEGENVNPLLSLVSQKKEKKYSLLRLGDAEIEALLAQRLATIGLTDLTRVEDVYPCSPLQEGLLVAQTKGVGSYDVYNIYEVTTSKNASVSVNPHVLAKAWKEVVRRHQILRTIFIQGLEESTAFNQVVLREVHNAPFVIEDVKSNDAKALLQNLATPEYPAFEPWHSVTICSDANGTVCCGIRMHHGLFDASSMDIILREVAQAYNQRLSTPAPLYRDYISYLQGLQQGGNDGLAYWQEYLKDLEPCYFPSINEEALGTRTPQSLQFNVPGLSRILLFSARKNVTVSTILQTAWALVLRHYTSTEEICFGYLSHGRDIPLDGIDNIVGPMINMMVLRVILSGDRTLTDILEGTRDDVLNSLPHQHTSLAEIHHALDLQGRSAFNTTLSFASAAADAENYDGIAFKNLSGSGSTEYDIAVNASVVGEDLQIHFSYWSSALSPQQATAVAQAFTNFMDILTDSSDLPLRDIDFTSAAMRAQLLRWNATPYAPVHTTVHELFHRTALRYPENQAICSTDGSFTYSELDNLTTRFASFLREKGVGPEVLVPVCFNKSCWTIVSMLSILKAGGACVPLDPSHPPARIQEVSSRCEAKLILAAPHLVDRLPDCNATVISVTDGLMQGLPNLPSNFQIDLAKPANAAFVPFTSGSTGLPKGIILDHMGLCTMFEANASVVGIDHNTRTFQYAAYTFDVSIAETYITLTQGGCVCVPTDAERMNDIAGAITRLQANWTFLTPSVASLLNPIDVPTLKTLTLGGEAISRDLHSTWADKVRLINSYGPAECSIWTSNQRLFPDSSCADIGAGITCHLWVTEPDNHDRLVPIGCVGELVVQGPNLARGYLKDEEKTAATYIDTPAWLRNDTRSIAKRVYKTGDLVRHCADGHLEFVGRKDTQIKFHGQRVEIGEVEYQLRARLPKNTQVAVEMIKPLSQDGRQTLAGFITTEGGSGHENKGSPSLKGSSGDPVSLLRDPDETFKNIVRKLEHQLAETLPSYMIPSVFISMLNIPRNTSMKIDRKALRTLGANLTREQIATYSFVQGDKRAPRTAMEKRLQECWASVLKISPESIGADDSFFRIGGDSIGAMQLVSAARKTGLSITVGDIFQHQKLSQMANIVARNAAATTEEISIKPFSLLPKQRPDEDLVELAAFKVGIDRTLLQDVYPCTPLQEGLISLTARDHGLYTLQAVYRLPEMINIQEFQLAWLAVTEELDILRTRIVDLGHLGSYQVVISPVISQMRWVYGNSLSTYLREDKEIPVGYGKPLARYAIIEEEEEGEQKKYFVWTAHHSIYDGWSLGLMMDLVEKKYLKTSTIPSPPFNKFIHWLTNLDKAATRQYWKSTFEACSAPQFPSVPQHYRTKAKAAMTYSIRLPQKIDSEITVPTILRTAWALNISQYTRSDDVVFGMTQTGRNAPIPGVTEIVAPLITTVPVRVVFNRSQTVGNVLQEVQNQMVAMIPHEHVGLQNISKFSAECQAASKFENLLLIQTQQDQMVSPIGLERIPVTDLDIPAFGIVAECEVADGQVLVSVGYDSTVVSEKQMTNILRQFDFLVNQIGSESARNTPLVEMHLLGDNEIKMLEALNQSPDDRVSRLAHELIHERAVLQPEAIAIDSQEVQLSYGELDDLSTRLAYFLIDLGTGPDKVIPLFFRRSPWAMVAMLGVIKSGSAFVFLDPGHPIDRLEFVVQQIDAKLVLTSPDLESTWREKLAVFCVSPSALQSLPRLHDGNLPVTAVTPQNILYCIFTSGSTGRPRGCVIEHSNFLSGAVHHARRSRISESTRIMQIAPYTFDVSILEMLTGLIGGGCICLPRDYHQGARVADIINDLNINWTFLTPSVARTIVPSEVPSLQTLILGGEALAKVDIQTWAGKLHLHNGYGPSECSVAVASNEVRDPTIDPANIGSKMGCNIWVVDAENHDILLPIGAVGELLVEGAIVGRGYLQEPEKTAAAFIQDPAWVHYLPNTKSSERRRFYKTGDLVRLNADGTIHFIGRKDTQIKLRGLRIEMGEIEHHASTYRAIRHAVVAVPRAGRMKESIVVVYTLNAYDDSNEQQSDLRPLSNTDLETSQMSPAQLRKHLATHLPPYMVPQTYIGVARLPLLASGKIDRPKLQRWLENMDDATSELIAAQVGKTATHEAGPIDPADKLALALSEPISRLLAGDDEAYLETLKGRNIVLSQSGLNSITVVSMRAMIRDKFNADVSIDRLMESTVTIQDVARMIEHGNTAAGTDKQESAPQLDLLAEVDRMMNSLITEASPDVQTLSQPTPRAERILLTGATGFLGTEILRQLLSNPASTRTVVAIVRARDQDHAMERIVSSAKAAQWWQEEYRSRITPWVGDLAAPRLGLSESQWSTVEGRDHPGSESGSTAGPAEPRIDAIIHNGALVHWGADYHRLRDVNVSSVVSLLAALTRSQAPPTLTFVSGGHVQLDDNETTDEEMAAVLAHSTGYGQSKFVADLVVKRFAARYSTSAVSIVKPGLILGTAQSGVSNTDDFFWRVVATAVEIGGFNAEEPENVILLAGAQQVASIVTDKLQLNLNPARSRSGIPSVETKVRLAITTQELWHMLSDEFGYPMRGMGPAEWLDAMRAAVHAQGESHRLWPVLHFLEAGGGYMGLPVGGCQLQGATGADQESEKEELLASLRKSISYMRQIGYLQSDAPHAVDKVVFGRRNV</sequence>
<organism>
    <name type="scientific">Emericella nidulans (strain FGSC A4 / ATCC 38163 / CBS 112.46 / NRRL 194 / M139)</name>
    <name type="common">Aspergillus nidulans</name>
    <dbReference type="NCBI Taxonomy" id="227321"/>
    <lineage>
        <taxon>Eukaryota</taxon>
        <taxon>Fungi</taxon>
        <taxon>Dikarya</taxon>
        <taxon>Ascomycota</taxon>
        <taxon>Pezizomycotina</taxon>
        <taxon>Eurotiomycetes</taxon>
        <taxon>Eurotiomycetidae</taxon>
        <taxon>Eurotiales</taxon>
        <taxon>Aspergillaceae</taxon>
        <taxon>Aspergillus</taxon>
        <taxon>Aspergillus subgen. Nidulantes</taxon>
    </lineage>
</organism>
<gene>
    <name evidence="8" type="primary">atnA</name>
    <name type="ORF">ANIA_07884</name>
</gene>
<reference key="1">
    <citation type="journal article" date="2005" name="Nature">
        <title>Sequencing of Aspergillus nidulans and comparative analysis with A. fumigatus and A. oryzae.</title>
        <authorList>
            <person name="Galagan J.E."/>
            <person name="Calvo S.E."/>
            <person name="Cuomo C."/>
            <person name="Ma L.-J."/>
            <person name="Wortman J.R."/>
            <person name="Batzoglou S."/>
            <person name="Lee S.-I."/>
            <person name="Bastuerkmen M."/>
            <person name="Spevak C.C."/>
            <person name="Clutterbuck J."/>
            <person name="Kapitonov V."/>
            <person name="Jurka J."/>
            <person name="Scazzocchio C."/>
            <person name="Farman M.L."/>
            <person name="Butler J."/>
            <person name="Purcell S."/>
            <person name="Harris S."/>
            <person name="Braus G.H."/>
            <person name="Draht O."/>
            <person name="Busch S."/>
            <person name="D'Enfert C."/>
            <person name="Bouchier C."/>
            <person name="Goldman G.H."/>
            <person name="Bell-Pedersen D."/>
            <person name="Griffiths-Jones S."/>
            <person name="Doonan J.H."/>
            <person name="Yu J."/>
            <person name="Vienken K."/>
            <person name="Pain A."/>
            <person name="Freitag M."/>
            <person name="Selker E.U."/>
            <person name="Archer D.B."/>
            <person name="Penalva M.A."/>
            <person name="Oakley B.R."/>
            <person name="Momany M."/>
            <person name="Tanaka T."/>
            <person name="Kumagai T."/>
            <person name="Asai K."/>
            <person name="Machida M."/>
            <person name="Nierman W.C."/>
            <person name="Denning D.W."/>
            <person name="Caddick M.X."/>
            <person name="Hynes M."/>
            <person name="Paoletti M."/>
            <person name="Fischer R."/>
            <person name="Miller B.L."/>
            <person name="Dyer P.S."/>
            <person name="Sachs M.S."/>
            <person name="Osmani S.A."/>
            <person name="Birren B.W."/>
        </authorList>
    </citation>
    <scope>NUCLEOTIDE SEQUENCE [LARGE SCALE GENOMIC DNA]</scope>
    <source>
        <strain>FGSC A4 / ATCC 38163 / CBS 112.46 / NRRL 194 / M139</strain>
    </source>
</reference>
<reference key="2">
    <citation type="journal article" date="2009" name="Fungal Genet. Biol.">
        <title>The 2008 update of the Aspergillus nidulans genome annotation: a community effort.</title>
        <authorList>
            <person name="Wortman J.R."/>
            <person name="Gilsenan J.M."/>
            <person name="Joardar V."/>
            <person name="Deegan J."/>
            <person name="Clutterbuck J."/>
            <person name="Andersen M.R."/>
            <person name="Archer D."/>
            <person name="Bencina M."/>
            <person name="Braus G."/>
            <person name="Coutinho P."/>
            <person name="von Dohren H."/>
            <person name="Doonan J."/>
            <person name="Driessen A.J."/>
            <person name="Durek P."/>
            <person name="Espeso E."/>
            <person name="Fekete E."/>
            <person name="Flipphi M."/>
            <person name="Estrada C.G."/>
            <person name="Geysens S."/>
            <person name="Goldman G."/>
            <person name="de Groot P.W."/>
            <person name="Hansen K."/>
            <person name="Harris S.D."/>
            <person name="Heinekamp T."/>
            <person name="Helmstaedt K."/>
            <person name="Henrissat B."/>
            <person name="Hofmann G."/>
            <person name="Homan T."/>
            <person name="Horio T."/>
            <person name="Horiuchi H."/>
            <person name="James S."/>
            <person name="Jones M."/>
            <person name="Karaffa L."/>
            <person name="Karanyi Z."/>
            <person name="Kato M."/>
            <person name="Keller N."/>
            <person name="Kelly D.E."/>
            <person name="Kiel J.A."/>
            <person name="Kim J.M."/>
            <person name="van der Klei I.J."/>
            <person name="Klis F.M."/>
            <person name="Kovalchuk A."/>
            <person name="Krasevec N."/>
            <person name="Kubicek C.P."/>
            <person name="Liu B."/>
            <person name="Maccabe A."/>
            <person name="Meyer V."/>
            <person name="Mirabito P."/>
            <person name="Miskei M."/>
            <person name="Mos M."/>
            <person name="Mullins J."/>
            <person name="Nelson D.R."/>
            <person name="Nielsen J."/>
            <person name="Oakley B.R."/>
            <person name="Osmani S.A."/>
            <person name="Pakula T."/>
            <person name="Paszewski A."/>
            <person name="Paulsen I."/>
            <person name="Pilsyk S."/>
            <person name="Pocsi I."/>
            <person name="Punt P.J."/>
            <person name="Ram A.F."/>
            <person name="Ren Q."/>
            <person name="Robellet X."/>
            <person name="Robson G."/>
            <person name="Seiboth B."/>
            <person name="van Solingen P."/>
            <person name="Specht T."/>
            <person name="Sun J."/>
            <person name="Taheri-Talesh N."/>
            <person name="Takeshita N."/>
            <person name="Ussery D."/>
            <person name="vanKuyk P.A."/>
            <person name="Visser H."/>
            <person name="van de Vondervoort P.J."/>
            <person name="de Vries R.P."/>
            <person name="Walton J."/>
            <person name="Xiang X."/>
            <person name="Xiong Y."/>
            <person name="Zeng A.P."/>
            <person name="Brandt B.W."/>
            <person name="Cornell M.J."/>
            <person name="van den Hondel C.A."/>
            <person name="Visser J."/>
            <person name="Oliver S.G."/>
            <person name="Turner G."/>
        </authorList>
    </citation>
    <scope>GENOME REANNOTATION</scope>
    <source>
        <strain>FGSC A4 / ATCC 38163 / CBS 112.46 / NRRL 194 / M139</strain>
    </source>
</reference>
<reference key="3">
    <citation type="journal article" date="2013" name="Proc. Natl. Acad. Sci. U.S.A.">
        <title>Accurate prediction of secondary metabolite gene clusters in filamentous fungi.</title>
        <authorList>
            <person name="Andersen M.R."/>
            <person name="Nielsen J.B."/>
            <person name="Klitgaard A."/>
            <person name="Petersen L.M."/>
            <person name="Zachariasen M."/>
            <person name="Hansen T.J."/>
            <person name="Blicher L.H."/>
            <person name="Gotfredsen C.H."/>
            <person name="Larsen T.O."/>
            <person name="Nielsen K.F."/>
            <person name="Mortensen U.H."/>
        </authorList>
    </citation>
    <scope>IDENTIFICATION OF THE CLUSTER</scope>
</reference>
<reference key="4">
    <citation type="journal article" date="2016" name="ACS Chem. Biol.">
        <title>New aspercryptins, lipopeptide natural products, revealed by HDAC inhibition in Aspergillus nidulans.</title>
        <authorList>
            <person name="Henke M.T."/>
            <person name="Soukup A.A."/>
            <person name="Goering A.W."/>
            <person name="McClure R.A."/>
            <person name="Thomson R.J."/>
            <person name="Keller N.P."/>
            <person name="Kelleher N.L."/>
        </authorList>
    </citation>
    <scope>FUNCTION</scope>
    <scope>DISRUPTION PHENOTYPE</scope>
    <scope>INDUCTION</scope>
</reference>
<reference key="5">
    <citation type="journal article" date="2016" name="Angew. Chem. Int. Ed.">
        <title>Development of genetic dereplication strains in Aspergillus nidulans results in the discovery of aspercryptin.</title>
        <authorList>
            <person name="Chiang Y.M."/>
            <person name="Ahuja M."/>
            <person name="Oakley C.E."/>
            <person name="Entwistle R."/>
            <person name="Asokan A."/>
            <person name="Zutz C."/>
            <person name="Wang C.C."/>
            <person name="Oakley B.R."/>
        </authorList>
    </citation>
    <scope>FUNCTION</scope>
    <scope>DISRUPTION PHENOTYPE</scope>
    <scope>PATHWAY</scope>
</reference>
<proteinExistence type="evidence at transcript level"/>
<dbReference type="EC" id="6.3.2.-" evidence="10"/>
<dbReference type="EMBL" id="BN001302">
    <property type="protein sequence ID" value="CBF73453.1"/>
    <property type="molecule type" value="Genomic_DNA"/>
</dbReference>
<dbReference type="EMBL" id="AACD01000135">
    <property type="protein sequence ID" value="EAA59538.1"/>
    <property type="molecule type" value="Genomic_DNA"/>
</dbReference>
<dbReference type="RefSeq" id="XP_681153.1">
    <property type="nucleotide sequence ID" value="XM_676061.1"/>
</dbReference>
<dbReference type="SMR" id="Q5AUZ6"/>
<dbReference type="STRING" id="227321.Q5AUZ6"/>
<dbReference type="EnsemblFungi" id="CBF73453">
    <property type="protein sequence ID" value="CBF73453"/>
    <property type="gene ID" value="ANIA_07884"/>
</dbReference>
<dbReference type="GeneID" id="2868928"/>
<dbReference type="KEGG" id="ani:ANIA_07884"/>
<dbReference type="eggNOG" id="KOG1177">
    <property type="taxonomic scope" value="Eukaryota"/>
</dbReference>
<dbReference type="eggNOG" id="KOG1178">
    <property type="taxonomic scope" value="Eukaryota"/>
</dbReference>
<dbReference type="HOGENOM" id="CLU_222946_0_0_1"/>
<dbReference type="InParanoid" id="Q5AUZ6"/>
<dbReference type="OMA" id="HAMERIV"/>
<dbReference type="OrthoDB" id="416786at2759"/>
<dbReference type="Proteomes" id="UP000000560">
    <property type="component" value="Chromosome II"/>
</dbReference>
<dbReference type="GO" id="GO:0005737">
    <property type="term" value="C:cytoplasm"/>
    <property type="evidence" value="ECO:0000318"/>
    <property type="project" value="GO_Central"/>
</dbReference>
<dbReference type="GO" id="GO:0016853">
    <property type="term" value="F:isomerase activity"/>
    <property type="evidence" value="ECO:0007669"/>
    <property type="project" value="UniProtKB-KW"/>
</dbReference>
<dbReference type="GO" id="GO:0016874">
    <property type="term" value="F:ligase activity"/>
    <property type="evidence" value="ECO:0007669"/>
    <property type="project" value="UniProtKB-KW"/>
</dbReference>
<dbReference type="GO" id="GO:0031177">
    <property type="term" value="F:phosphopantetheine binding"/>
    <property type="evidence" value="ECO:0000318"/>
    <property type="project" value="GO_Central"/>
</dbReference>
<dbReference type="GO" id="GO:0043041">
    <property type="term" value="P:amino acid activation for nonribosomal peptide biosynthetic process"/>
    <property type="evidence" value="ECO:0000318"/>
    <property type="project" value="GO_Central"/>
</dbReference>
<dbReference type="GO" id="GO:0044550">
    <property type="term" value="P:secondary metabolite biosynthetic process"/>
    <property type="evidence" value="ECO:0000318"/>
    <property type="project" value="GO_Central"/>
</dbReference>
<dbReference type="CDD" id="cd05918">
    <property type="entry name" value="A_NRPS_SidN3_like"/>
    <property type="match status" value="6"/>
</dbReference>
<dbReference type="CDD" id="cd19542">
    <property type="entry name" value="CT_NRPS-like"/>
    <property type="match status" value="2"/>
</dbReference>
<dbReference type="CDD" id="cd19534">
    <property type="entry name" value="E_NRPS"/>
    <property type="match status" value="1"/>
</dbReference>
<dbReference type="CDD" id="cd19545">
    <property type="entry name" value="FUM14_C_NRPS-like"/>
    <property type="match status" value="3"/>
</dbReference>
<dbReference type="FunFam" id="3.40.50.980:FF:000001">
    <property type="entry name" value="Non-ribosomal peptide synthetase"/>
    <property type="match status" value="3"/>
</dbReference>
<dbReference type="FunFam" id="3.30.559.10:FF:000016">
    <property type="entry name" value="Nonribosomal peptide synthase Pes1"/>
    <property type="match status" value="1"/>
</dbReference>
<dbReference type="FunFam" id="3.30.559.30:FF:000002">
    <property type="entry name" value="Nonribosomal peptide synthase Pes1"/>
    <property type="match status" value="1"/>
</dbReference>
<dbReference type="FunFam" id="3.30.559.30:FF:000005">
    <property type="entry name" value="Nonribosomal peptide synthase Pes1"/>
    <property type="match status" value="2"/>
</dbReference>
<dbReference type="FunFam" id="3.30.300.30:FF:000015">
    <property type="entry name" value="Nonribosomal peptide synthase SidD"/>
    <property type="match status" value="6"/>
</dbReference>
<dbReference type="FunFam" id="3.30.559.30:FF:000003">
    <property type="entry name" value="Nonribosomal peptide synthase SidD"/>
    <property type="match status" value="3"/>
</dbReference>
<dbReference type="FunFam" id="1.10.1200.10:FF:000005">
    <property type="entry name" value="Nonribosomal peptide synthetase 1"/>
    <property type="match status" value="3"/>
</dbReference>
<dbReference type="FunFam" id="3.40.50.12780:FF:000014">
    <property type="entry name" value="Nonribosomal peptide synthetase 1"/>
    <property type="match status" value="5"/>
</dbReference>
<dbReference type="Gene3D" id="3.30.300.30">
    <property type="match status" value="6"/>
</dbReference>
<dbReference type="Gene3D" id="1.10.1200.10">
    <property type="entry name" value="ACP-like"/>
    <property type="match status" value="5"/>
</dbReference>
<dbReference type="Gene3D" id="3.30.559.10">
    <property type="entry name" value="Chloramphenicol acetyltransferase-like domain"/>
    <property type="match status" value="6"/>
</dbReference>
<dbReference type="Gene3D" id="3.40.50.12780">
    <property type="entry name" value="N-terminal domain of ligase-like"/>
    <property type="match status" value="6"/>
</dbReference>
<dbReference type="Gene3D" id="3.40.50.720">
    <property type="entry name" value="NAD(P)-binding Rossmann-like Domain"/>
    <property type="match status" value="1"/>
</dbReference>
<dbReference type="Gene3D" id="3.30.559.30">
    <property type="entry name" value="Nonribosomal peptide synthetase, condensation domain"/>
    <property type="match status" value="7"/>
</dbReference>
<dbReference type="InterPro" id="IPR010071">
    <property type="entry name" value="AA_adenyl_dom"/>
</dbReference>
<dbReference type="InterPro" id="IPR036736">
    <property type="entry name" value="ACP-like_sf"/>
</dbReference>
<dbReference type="InterPro" id="IPR045851">
    <property type="entry name" value="AMP-bd_C_sf"/>
</dbReference>
<dbReference type="InterPro" id="IPR020845">
    <property type="entry name" value="AMP-binding_CS"/>
</dbReference>
<dbReference type="InterPro" id="IPR000873">
    <property type="entry name" value="AMP-dep_synth/lig_dom"/>
</dbReference>
<dbReference type="InterPro" id="IPR042099">
    <property type="entry name" value="ANL_N_sf"/>
</dbReference>
<dbReference type="InterPro" id="IPR023213">
    <property type="entry name" value="CAT-like_dom_sf"/>
</dbReference>
<dbReference type="InterPro" id="IPR001242">
    <property type="entry name" value="Condensatn"/>
</dbReference>
<dbReference type="InterPro" id="IPR013120">
    <property type="entry name" value="Far_NAD-bd"/>
</dbReference>
<dbReference type="InterPro" id="IPR036291">
    <property type="entry name" value="NAD(P)-bd_dom_sf"/>
</dbReference>
<dbReference type="InterPro" id="IPR020806">
    <property type="entry name" value="PKS_PP-bd"/>
</dbReference>
<dbReference type="InterPro" id="IPR009081">
    <property type="entry name" value="PP-bd_ACP"/>
</dbReference>
<dbReference type="InterPro" id="IPR006162">
    <property type="entry name" value="Ppantetheine_attach_site"/>
</dbReference>
<dbReference type="InterPro" id="IPR010080">
    <property type="entry name" value="Thioester_reductase-like_dom"/>
</dbReference>
<dbReference type="NCBIfam" id="TIGR01733">
    <property type="entry name" value="AA-adenyl-dom"/>
    <property type="match status" value="6"/>
</dbReference>
<dbReference type="NCBIfam" id="NF003417">
    <property type="entry name" value="PRK04813.1"/>
    <property type="match status" value="6"/>
</dbReference>
<dbReference type="NCBIfam" id="TIGR01746">
    <property type="entry name" value="Thioester-redct"/>
    <property type="match status" value="1"/>
</dbReference>
<dbReference type="PANTHER" id="PTHR45527">
    <property type="entry name" value="NONRIBOSOMAL PEPTIDE SYNTHETASE"/>
    <property type="match status" value="1"/>
</dbReference>
<dbReference type="PANTHER" id="PTHR45527:SF12">
    <property type="entry name" value="NONRIBOSOMAL PEPTIDE SYNTHETASE IVOA"/>
    <property type="match status" value="1"/>
</dbReference>
<dbReference type="Pfam" id="PF00501">
    <property type="entry name" value="AMP-binding"/>
    <property type="match status" value="6"/>
</dbReference>
<dbReference type="Pfam" id="PF00668">
    <property type="entry name" value="Condensation"/>
    <property type="match status" value="6"/>
</dbReference>
<dbReference type="Pfam" id="PF07993">
    <property type="entry name" value="NAD_binding_4"/>
    <property type="match status" value="1"/>
</dbReference>
<dbReference type="Pfam" id="PF00550">
    <property type="entry name" value="PP-binding"/>
    <property type="match status" value="6"/>
</dbReference>
<dbReference type="SMART" id="SM00823">
    <property type="entry name" value="PKS_PP"/>
    <property type="match status" value="5"/>
</dbReference>
<dbReference type="SUPFAM" id="SSF56801">
    <property type="entry name" value="Acetyl-CoA synthetase-like"/>
    <property type="match status" value="6"/>
</dbReference>
<dbReference type="SUPFAM" id="SSF47336">
    <property type="entry name" value="ACP-like"/>
    <property type="match status" value="5"/>
</dbReference>
<dbReference type="SUPFAM" id="SSF52777">
    <property type="entry name" value="CoA-dependent acyltransferases"/>
    <property type="match status" value="13"/>
</dbReference>
<dbReference type="SUPFAM" id="SSF51735">
    <property type="entry name" value="NAD(P)-binding Rossmann-fold domains"/>
    <property type="match status" value="1"/>
</dbReference>
<dbReference type="PROSITE" id="PS00455">
    <property type="entry name" value="AMP_BINDING"/>
    <property type="match status" value="5"/>
</dbReference>
<dbReference type="PROSITE" id="PS50075">
    <property type="entry name" value="CARRIER"/>
    <property type="match status" value="5"/>
</dbReference>
<dbReference type="PROSITE" id="PS00012">
    <property type="entry name" value="PHOSPHOPANTETHEINE"/>
    <property type="match status" value="3"/>
</dbReference>
<keyword id="KW-0413">Isomerase</keyword>
<keyword id="KW-0436">Ligase</keyword>
<keyword id="KW-0596">Phosphopantetheine</keyword>
<keyword id="KW-0597">Phosphoprotein</keyword>
<keyword id="KW-1185">Reference proteome</keyword>
<keyword id="KW-0677">Repeat</keyword>